<gene>
    <name evidence="1" type="primary">pheT</name>
    <name type="ordered locus">TPASS_0015</name>
</gene>
<keyword id="KW-0030">Aminoacyl-tRNA synthetase</keyword>
<keyword id="KW-0067">ATP-binding</keyword>
<keyword id="KW-0963">Cytoplasm</keyword>
<keyword id="KW-0436">Ligase</keyword>
<keyword id="KW-0460">Magnesium</keyword>
<keyword id="KW-0479">Metal-binding</keyword>
<keyword id="KW-0547">Nucleotide-binding</keyword>
<keyword id="KW-0648">Protein biosynthesis</keyword>
<protein>
    <recommendedName>
        <fullName evidence="1">Phenylalanine--tRNA ligase beta subunit</fullName>
        <ecNumber evidence="1">6.1.1.20</ecNumber>
    </recommendedName>
    <alternativeName>
        <fullName evidence="1">Phenylalanyl-tRNA synthetase beta subunit</fullName>
        <shortName evidence="1">PheRS</shortName>
    </alternativeName>
</protein>
<proteinExistence type="inferred from homology"/>
<sequence length="604" mass="67190">MPKISIHEALFFELLGERCDDDTLERRLRSAKAELECSSFSVREDKEGGSLSPGGEVCDPVQRTRGQASCVREGAFDARLLKIELNDTNRPDLWSTAGLARLLRVHAGGASRAAQYRAFLSDRCTVRDSYGRCVVVDARLQTIRPFIAGFVARGTGLSEVRLWDLIQTQERLASNFGRRRCTLSLGCYRAQDICWPLAYRAVLLAEVSFTPLGMSMPLSGEQILTQHPKGREYGHLLKDYSFVPLLVDARGEVLSLIPITNSASLGAVVTGDTELFIECSGTDMCAVLVAVNSLACDLSDMGMQIEPVQITYSFDTPWGRSVTTPFYFQEKREVAHEQIDRLLGMPLPVADITEAFARMDCAVQVKQGTYVVEPAAYRNDFLHAVDLIEEVMLGRTLDRFSPQVPCSFTVGRLSDLTLLTRKIKHLLVGFGYQEMIFHYLGSAREFCTRMRCTADDLIEIENPLTESYRFVRRSIIPCLLSAELKSAHALYPHRIFEIGKVAFCSPHGEHGTCTQQSLGFLNASQEASYNEVASLVSGLLYCLKLPYQVEEAQDPRFVLGRQASICVHGSRVGIFGEIHPQVLSNWDIRMPCFAGELDVGALLP</sequence>
<accession>B2S1W3</accession>
<reference key="1">
    <citation type="journal article" date="2008" name="BMC Microbiol.">
        <title>Complete genome sequence of Treponema pallidum ssp. pallidum strain SS14 determined with oligonucleotide arrays.</title>
        <authorList>
            <person name="Matejkova P."/>
            <person name="Strouhal M."/>
            <person name="Smajs D."/>
            <person name="Norris S.J."/>
            <person name="Palzkill T."/>
            <person name="Petrosino J.F."/>
            <person name="Sodergren E."/>
            <person name="Norton J.E."/>
            <person name="Singh J."/>
            <person name="Richmond T.A."/>
            <person name="Molla M.N."/>
            <person name="Albert T.J."/>
            <person name="Weinstock G.M."/>
        </authorList>
    </citation>
    <scope>NUCLEOTIDE SEQUENCE [LARGE SCALE GENOMIC DNA]</scope>
    <source>
        <strain>SS14</strain>
    </source>
</reference>
<comment type="catalytic activity">
    <reaction evidence="1">
        <text>tRNA(Phe) + L-phenylalanine + ATP = L-phenylalanyl-tRNA(Phe) + AMP + diphosphate + H(+)</text>
        <dbReference type="Rhea" id="RHEA:19413"/>
        <dbReference type="Rhea" id="RHEA-COMP:9668"/>
        <dbReference type="Rhea" id="RHEA-COMP:9699"/>
        <dbReference type="ChEBI" id="CHEBI:15378"/>
        <dbReference type="ChEBI" id="CHEBI:30616"/>
        <dbReference type="ChEBI" id="CHEBI:33019"/>
        <dbReference type="ChEBI" id="CHEBI:58095"/>
        <dbReference type="ChEBI" id="CHEBI:78442"/>
        <dbReference type="ChEBI" id="CHEBI:78531"/>
        <dbReference type="ChEBI" id="CHEBI:456215"/>
        <dbReference type="EC" id="6.1.1.20"/>
    </reaction>
</comment>
<comment type="cofactor">
    <cofactor evidence="1">
        <name>Mg(2+)</name>
        <dbReference type="ChEBI" id="CHEBI:18420"/>
    </cofactor>
</comment>
<comment type="subunit">
    <text evidence="1">Tetramer of two alpha and two beta subunits.</text>
</comment>
<comment type="subcellular location">
    <subcellularLocation>
        <location evidence="1">Cytoplasm</location>
    </subcellularLocation>
</comment>
<comment type="similarity">
    <text evidence="1">Belongs to the phenylalanyl-tRNA synthetase beta subunit family. Type 2 subfamily.</text>
</comment>
<organism>
    <name type="scientific">Treponema pallidum subsp. pallidum (strain SS14)</name>
    <dbReference type="NCBI Taxonomy" id="455434"/>
    <lineage>
        <taxon>Bacteria</taxon>
        <taxon>Pseudomonadati</taxon>
        <taxon>Spirochaetota</taxon>
        <taxon>Spirochaetia</taxon>
        <taxon>Spirochaetales</taxon>
        <taxon>Treponemataceae</taxon>
        <taxon>Treponema</taxon>
    </lineage>
</organism>
<dbReference type="EC" id="6.1.1.20" evidence="1"/>
<dbReference type="EMBL" id="CP000805">
    <property type="protein sequence ID" value="ACD70442.1"/>
    <property type="molecule type" value="Genomic_DNA"/>
</dbReference>
<dbReference type="RefSeq" id="WP_010881464.1">
    <property type="nucleotide sequence ID" value="NC_021508.1"/>
</dbReference>
<dbReference type="SMR" id="B2S1W3"/>
<dbReference type="GeneID" id="93875809"/>
<dbReference type="KEGG" id="tpp:TPASS_0015"/>
<dbReference type="PATRIC" id="fig|455434.6.peg.12"/>
<dbReference type="Proteomes" id="UP000001202">
    <property type="component" value="Chromosome"/>
</dbReference>
<dbReference type="GO" id="GO:0009328">
    <property type="term" value="C:phenylalanine-tRNA ligase complex"/>
    <property type="evidence" value="ECO:0007669"/>
    <property type="project" value="TreeGrafter"/>
</dbReference>
<dbReference type="GO" id="GO:0005524">
    <property type="term" value="F:ATP binding"/>
    <property type="evidence" value="ECO:0007669"/>
    <property type="project" value="UniProtKB-UniRule"/>
</dbReference>
<dbReference type="GO" id="GO:0000287">
    <property type="term" value="F:magnesium ion binding"/>
    <property type="evidence" value="ECO:0007669"/>
    <property type="project" value="InterPro"/>
</dbReference>
<dbReference type="GO" id="GO:0004826">
    <property type="term" value="F:phenylalanine-tRNA ligase activity"/>
    <property type="evidence" value="ECO:0007669"/>
    <property type="project" value="UniProtKB-UniRule"/>
</dbReference>
<dbReference type="GO" id="GO:0003723">
    <property type="term" value="F:RNA binding"/>
    <property type="evidence" value="ECO:0007669"/>
    <property type="project" value="InterPro"/>
</dbReference>
<dbReference type="GO" id="GO:0006432">
    <property type="term" value="P:phenylalanyl-tRNA aminoacylation"/>
    <property type="evidence" value="ECO:0007669"/>
    <property type="project" value="UniProtKB-UniRule"/>
</dbReference>
<dbReference type="CDD" id="cd00769">
    <property type="entry name" value="PheRS_beta_core"/>
    <property type="match status" value="1"/>
</dbReference>
<dbReference type="Gene3D" id="3.30.56.10">
    <property type="match status" value="2"/>
</dbReference>
<dbReference type="Gene3D" id="3.30.930.10">
    <property type="entry name" value="Bira Bifunctional Protein, Domain 2"/>
    <property type="match status" value="1"/>
</dbReference>
<dbReference type="Gene3D" id="3.50.40.10">
    <property type="entry name" value="Phenylalanyl-trna Synthetase, Chain B, domain 3"/>
    <property type="match status" value="1"/>
</dbReference>
<dbReference type="HAMAP" id="MF_00284">
    <property type="entry name" value="Phe_tRNA_synth_beta2"/>
    <property type="match status" value="1"/>
</dbReference>
<dbReference type="InterPro" id="IPR045864">
    <property type="entry name" value="aa-tRNA-synth_II/BPL/LPL"/>
</dbReference>
<dbReference type="InterPro" id="IPR005146">
    <property type="entry name" value="B3/B4_tRNA-bd"/>
</dbReference>
<dbReference type="InterPro" id="IPR009061">
    <property type="entry name" value="DNA-bd_dom_put_sf"/>
</dbReference>
<dbReference type="InterPro" id="IPR045060">
    <property type="entry name" value="Phe-tRNA-ligase_IIc_bsu"/>
</dbReference>
<dbReference type="InterPro" id="IPR004531">
    <property type="entry name" value="Phe-tRNA-synth_IIc_bsu_arc_euk"/>
</dbReference>
<dbReference type="InterPro" id="IPR020825">
    <property type="entry name" value="Phe-tRNA_synthase-like_B3/B4"/>
</dbReference>
<dbReference type="InterPro" id="IPR022918">
    <property type="entry name" value="Phe_tRNA_ligase_beta2_arc"/>
</dbReference>
<dbReference type="InterPro" id="IPR041616">
    <property type="entry name" value="PheRS_beta_core"/>
</dbReference>
<dbReference type="InterPro" id="IPR005147">
    <property type="entry name" value="tRNA_synthase_B5-dom"/>
</dbReference>
<dbReference type="NCBIfam" id="TIGR00471">
    <property type="entry name" value="pheT_arch"/>
    <property type="match status" value="1"/>
</dbReference>
<dbReference type="PANTHER" id="PTHR10947:SF0">
    <property type="entry name" value="PHENYLALANINE--TRNA LIGASE BETA SUBUNIT"/>
    <property type="match status" value="1"/>
</dbReference>
<dbReference type="PANTHER" id="PTHR10947">
    <property type="entry name" value="PHENYLALANYL-TRNA SYNTHETASE BETA CHAIN AND LEUCINE-RICH REPEAT-CONTAINING PROTEIN 47"/>
    <property type="match status" value="1"/>
</dbReference>
<dbReference type="Pfam" id="PF03484">
    <property type="entry name" value="B5"/>
    <property type="match status" value="1"/>
</dbReference>
<dbReference type="Pfam" id="PF17759">
    <property type="entry name" value="tRNA_synthFbeta"/>
    <property type="match status" value="1"/>
</dbReference>
<dbReference type="SMART" id="SM00873">
    <property type="entry name" value="B3_4"/>
    <property type="match status" value="1"/>
</dbReference>
<dbReference type="SMART" id="SM00874">
    <property type="entry name" value="B5"/>
    <property type="match status" value="1"/>
</dbReference>
<dbReference type="SUPFAM" id="SSF55681">
    <property type="entry name" value="Class II aaRS and biotin synthetases"/>
    <property type="match status" value="1"/>
</dbReference>
<dbReference type="SUPFAM" id="SSF46955">
    <property type="entry name" value="Putative DNA-binding domain"/>
    <property type="match status" value="1"/>
</dbReference>
<dbReference type="PROSITE" id="PS51483">
    <property type="entry name" value="B5"/>
    <property type="match status" value="1"/>
</dbReference>
<evidence type="ECO:0000255" key="1">
    <source>
        <dbReference type="HAMAP-Rule" id="MF_00284"/>
    </source>
</evidence>
<feature type="chain" id="PRO_1000114947" description="Phenylalanine--tRNA ligase beta subunit">
    <location>
        <begin position="1"/>
        <end position="604"/>
    </location>
</feature>
<feature type="domain" description="B5" evidence="1">
    <location>
        <begin position="327"/>
        <end position="402"/>
    </location>
</feature>
<feature type="binding site" evidence="1">
    <location>
        <position position="380"/>
    </location>
    <ligand>
        <name>Mg(2+)</name>
        <dbReference type="ChEBI" id="CHEBI:18420"/>
        <note>shared with alpha subunit</note>
    </ligand>
</feature>
<feature type="binding site" evidence="1">
    <location>
        <position position="386"/>
    </location>
    <ligand>
        <name>Mg(2+)</name>
        <dbReference type="ChEBI" id="CHEBI:18420"/>
        <note>shared with alpha subunit</note>
    </ligand>
</feature>
<feature type="binding site" evidence="1">
    <location>
        <position position="389"/>
    </location>
    <ligand>
        <name>Mg(2+)</name>
        <dbReference type="ChEBI" id="CHEBI:18420"/>
        <note>shared with alpha subunit</note>
    </ligand>
</feature>
<feature type="binding site" evidence="1">
    <location>
        <position position="390"/>
    </location>
    <ligand>
        <name>Mg(2+)</name>
        <dbReference type="ChEBI" id="CHEBI:18420"/>
        <note>shared with alpha subunit</note>
    </ligand>
</feature>
<name>SYFB_TREPS</name>